<proteinExistence type="inferred from homology"/>
<organism>
    <name type="scientific">Bacteroides thetaiotaomicron (strain ATCC 29148 / DSM 2079 / JCM 5827 / CCUG 10774 / NCTC 10582 / VPI-5482 / E50)</name>
    <dbReference type="NCBI Taxonomy" id="226186"/>
    <lineage>
        <taxon>Bacteria</taxon>
        <taxon>Pseudomonadati</taxon>
        <taxon>Bacteroidota</taxon>
        <taxon>Bacteroidia</taxon>
        <taxon>Bacteroidales</taxon>
        <taxon>Bacteroidaceae</taxon>
        <taxon>Bacteroides</taxon>
    </lineage>
</organism>
<sequence>MIKITFPDGSVREYNEGVNGLQIAESISSRLAQDVLACGVNGETYDLGRPINEDADFVLYKWDDEEGKHAFWHTSAHLLAEALQELYPGIQFGIGPAIENGFYYDVDPGEAVIKESDLPAIEAKMLELSAKKDAVVRESISKTDALKMFGDRGETYKCELISELEDGHITTYTQGAFTDLCRGPHLMTTAPIKAIKLTTVAGAYWRGHEDRKMLTRIYGITFPKKKMLDEYLVLLEEAKKRDHRKIGKEMQLFMFSETVGKGLPMWLPKGTALRLRLQEFLRRIQTRYDYQEVITPPIGNKLLYVTSGHYAKYGKDAFQPIHTPEEGEEYFLKPMNCPHHCEIYKNFPRSYKDLPLRIAEFGTVCRYEQSGELHGLTRVRSFTQDDAHIFCRPDQVKDEFLRVMDIISIVFRSMNFQNFEAQISLRDKVNREKYIGSDDNWEKAEQAIIEACEEKGLPAKIEYGEAAFYGPKLDFMVKDAIGRRWQLGTIQVDYNLPERFELEYMGSDNQKHRPVMIHRAPFGSMERFVAVLIEHTAGKFPLWLTPDQVAILPISEKFNEYAEQVKMYLKMHEIRAIVDDRNEKIGRKIRDNEMKRIPYMLIVGEKEAENGEVSVRRQGEGDKGTMKYEEFAKILNEEVQNMINKW</sequence>
<evidence type="ECO:0000255" key="1">
    <source>
        <dbReference type="HAMAP-Rule" id="MF_00184"/>
    </source>
</evidence>
<evidence type="ECO:0000255" key="2">
    <source>
        <dbReference type="PROSITE-ProRule" id="PRU01228"/>
    </source>
</evidence>
<gene>
    <name evidence="1" type="primary">thrS</name>
    <name type="ordered locus">BT_0422</name>
</gene>
<feature type="chain" id="PRO_0000100940" description="Threonine--tRNA ligase">
    <location>
        <begin position="1"/>
        <end position="646"/>
    </location>
</feature>
<feature type="domain" description="TGS" evidence="2">
    <location>
        <begin position="1"/>
        <end position="61"/>
    </location>
</feature>
<feature type="region of interest" description="Catalytic" evidence="1">
    <location>
        <begin position="242"/>
        <end position="541"/>
    </location>
</feature>
<feature type="binding site" evidence="1">
    <location>
        <position position="337"/>
    </location>
    <ligand>
        <name>Zn(2+)</name>
        <dbReference type="ChEBI" id="CHEBI:29105"/>
    </ligand>
</feature>
<feature type="binding site" evidence="1">
    <location>
        <position position="388"/>
    </location>
    <ligand>
        <name>Zn(2+)</name>
        <dbReference type="ChEBI" id="CHEBI:29105"/>
    </ligand>
</feature>
<feature type="binding site" evidence="1">
    <location>
        <position position="518"/>
    </location>
    <ligand>
        <name>Zn(2+)</name>
        <dbReference type="ChEBI" id="CHEBI:29105"/>
    </ligand>
</feature>
<accession>Q8AAP2</accession>
<name>SYT_BACTN</name>
<protein>
    <recommendedName>
        <fullName evidence="1">Threonine--tRNA ligase</fullName>
        <ecNumber evidence="1">6.1.1.3</ecNumber>
    </recommendedName>
    <alternativeName>
        <fullName evidence="1">Threonyl-tRNA synthetase</fullName>
        <shortName evidence="1">ThrRS</shortName>
    </alternativeName>
</protein>
<comment type="function">
    <text evidence="1">Catalyzes the attachment of threonine to tRNA(Thr) in a two-step reaction: L-threonine is first activated by ATP to form Thr-AMP and then transferred to the acceptor end of tRNA(Thr). Also edits incorrectly charged L-seryl-tRNA(Thr).</text>
</comment>
<comment type="catalytic activity">
    <reaction evidence="1">
        <text>tRNA(Thr) + L-threonine + ATP = L-threonyl-tRNA(Thr) + AMP + diphosphate + H(+)</text>
        <dbReference type="Rhea" id="RHEA:24624"/>
        <dbReference type="Rhea" id="RHEA-COMP:9670"/>
        <dbReference type="Rhea" id="RHEA-COMP:9704"/>
        <dbReference type="ChEBI" id="CHEBI:15378"/>
        <dbReference type="ChEBI" id="CHEBI:30616"/>
        <dbReference type="ChEBI" id="CHEBI:33019"/>
        <dbReference type="ChEBI" id="CHEBI:57926"/>
        <dbReference type="ChEBI" id="CHEBI:78442"/>
        <dbReference type="ChEBI" id="CHEBI:78534"/>
        <dbReference type="ChEBI" id="CHEBI:456215"/>
        <dbReference type="EC" id="6.1.1.3"/>
    </reaction>
</comment>
<comment type="cofactor">
    <cofactor evidence="1">
        <name>Zn(2+)</name>
        <dbReference type="ChEBI" id="CHEBI:29105"/>
    </cofactor>
    <text evidence="1">Binds 1 zinc ion per subunit.</text>
</comment>
<comment type="subunit">
    <text evidence="1">Homodimer.</text>
</comment>
<comment type="subcellular location">
    <subcellularLocation>
        <location evidence="1">Cytoplasm</location>
    </subcellularLocation>
</comment>
<comment type="similarity">
    <text evidence="1">Belongs to the class-II aminoacyl-tRNA synthetase family.</text>
</comment>
<keyword id="KW-0030">Aminoacyl-tRNA synthetase</keyword>
<keyword id="KW-0067">ATP-binding</keyword>
<keyword id="KW-0963">Cytoplasm</keyword>
<keyword id="KW-0436">Ligase</keyword>
<keyword id="KW-0479">Metal-binding</keyword>
<keyword id="KW-0547">Nucleotide-binding</keyword>
<keyword id="KW-0648">Protein biosynthesis</keyword>
<keyword id="KW-1185">Reference proteome</keyword>
<keyword id="KW-0694">RNA-binding</keyword>
<keyword id="KW-0820">tRNA-binding</keyword>
<keyword id="KW-0862">Zinc</keyword>
<dbReference type="EC" id="6.1.1.3" evidence="1"/>
<dbReference type="EMBL" id="AE015928">
    <property type="protein sequence ID" value="AAO75529.1"/>
    <property type="molecule type" value="Genomic_DNA"/>
</dbReference>
<dbReference type="RefSeq" id="NP_809335.1">
    <property type="nucleotide sequence ID" value="NC_004663.1"/>
</dbReference>
<dbReference type="RefSeq" id="WP_011107262.1">
    <property type="nucleotide sequence ID" value="NC_004663.1"/>
</dbReference>
<dbReference type="SMR" id="Q8AAP2"/>
<dbReference type="FunCoup" id="Q8AAP2">
    <property type="interactions" value="578"/>
</dbReference>
<dbReference type="STRING" id="226186.BT_0422"/>
<dbReference type="PaxDb" id="226186-BT_0422"/>
<dbReference type="EnsemblBacteria" id="AAO75529">
    <property type="protein sequence ID" value="AAO75529"/>
    <property type="gene ID" value="BT_0422"/>
</dbReference>
<dbReference type="GeneID" id="60926380"/>
<dbReference type="KEGG" id="bth:BT_0422"/>
<dbReference type="PATRIC" id="fig|226186.12.peg.421"/>
<dbReference type="eggNOG" id="COG0441">
    <property type="taxonomic scope" value="Bacteria"/>
</dbReference>
<dbReference type="HOGENOM" id="CLU_008554_0_1_10"/>
<dbReference type="InParanoid" id="Q8AAP2"/>
<dbReference type="OrthoDB" id="9802304at2"/>
<dbReference type="Proteomes" id="UP000001414">
    <property type="component" value="Chromosome"/>
</dbReference>
<dbReference type="GO" id="GO:0005737">
    <property type="term" value="C:cytoplasm"/>
    <property type="evidence" value="ECO:0007669"/>
    <property type="project" value="UniProtKB-SubCell"/>
</dbReference>
<dbReference type="GO" id="GO:0005524">
    <property type="term" value="F:ATP binding"/>
    <property type="evidence" value="ECO:0007669"/>
    <property type="project" value="UniProtKB-UniRule"/>
</dbReference>
<dbReference type="GO" id="GO:0046872">
    <property type="term" value="F:metal ion binding"/>
    <property type="evidence" value="ECO:0007669"/>
    <property type="project" value="UniProtKB-KW"/>
</dbReference>
<dbReference type="GO" id="GO:0004829">
    <property type="term" value="F:threonine-tRNA ligase activity"/>
    <property type="evidence" value="ECO:0000318"/>
    <property type="project" value="GO_Central"/>
</dbReference>
<dbReference type="GO" id="GO:0000049">
    <property type="term" value="F:tRNA binding"/>
    <property type="evidence" value="ECO:0007669"/>
    <property type="project" value="UniProtKB-KW"/>
</dbReference>
<dbReference type="GO" id="GO:0006435">
    <property type="term" value="P:threonyl-tRNA aminoacylation"/>
    <property type="evidence" value="ECO:0000318"/>
    <property type="project" value="GO_Central"/>
</dbReference>
<dbReference type="CDD" id="cd01667">
    <property type="entry name" value="TGS_ThrRS"/>
    <property type="match status" value="1"/>
</dbReference>
<dbReference type="CDD" id="cd00860">
    <property type="entry name" value="ThrRS_anticodon"/>
    <property type="match status" value="1"/>
</dbReference>
<dbReference type="CDD" id="cd00771">
    <property type="entry name" value="ThrRS_core"/>
    <property type="match status" value="1"/>
</dbReference>
<dbReference type="FunFam" id="3.10.20.30:FF:000005">
    <property type="entry name" value="Threonine--tRNA ligase"/>
    <property type="match status" value="1"/>
</dbReference>
<dbReference type="FunFam" id="3.30.54.20:FF:000002">
    <property type="entry name" value="Threonine--tRNA ligase"/>
    <property type="match status" value="1"/>
</dbReference>
<dbReference type="FunFam" id="3.30.930.10:FF:000002">
    <property type="entry name" value="Threonine--tRNA ligase"/>
    <property type="match status" value="1"/>
</dbReference>
<dbReference type="FunFam" id="3.40.50.800:FF:000001">
    <property type="entry name" value="Threonine--tRNA ligase"/>
    <property type="match status" value="1"/>
</dbReference>
<dbReference type="FunFam" id="3.30.980.10:FF:000005">
    <property type="entry name" value="Threonyl-tRNA synthetase, mitochondrial"/>
    <property type="match status" value="1"/>
</dbReference>
<dbReference type="Gene3D" id="3.10.20.30">
    <property type="match status" value="1"/>
</dbReference>
<dbReference type="Gene3D" id="3.30.54.20">
    <property type="match status" value="1"/>
</dbReference>
<dbReference type="Gene3D" id="3.40.50.800">
    <property type="entry name" value="Anticodon-binding domain"/>
    <property type="match status" value="1"/>
</dbReference>
<dbReference type="Gene3D" id="3.30.930.10">
    <property type="entry name" value="Bira Bifunctional Protein, Domain 2"/>
    <property type="match status" value="1"/>
</dbReference>
<dbReference type="Gene3D" id="3.30.980.10">
    <property type="entry name" value="Threonyl-trna Synthetase, Chain A, domain 2"/>
    <property type="match status" value="1"/>
</dbReference>
<dbReference type="HAMAP" id="MF_00184">
    <property type="entry name" value="Thr_tRNA_synth"/>
    <property type="match status" value="1"/>
</dbReference>
<dbReference type="InterPro" id="IPR002314">
    <property type="entry name" value="aa-tRNA-synt_IIb"/>
</dbReference>
<dbReference type="InterPro" id="IPR006195">
    <property type="entry name" value="aa-tRNA-synth_II"/>
</dbReference>
<dbReference type="InterPro" id="IPR045864">
    <property type="entry name" value="aa-tRNA-synth_II/BPL/LPL"/>
</dbReference>
<dbReference type="InterPro" id="IPR004154">
    <property type="entry name" value="Anticodon-bd"/>
</dbReference>
<dbReference type="InterPro" id="IPR036621">
    <property type="entry name" value="Anticodon-bd_dom_sf"/>
</dbReference>
<dbReference type="InterPro" id="IPR012675">
    <property type="entry name" value="Beta-grasp_dom_sf"/>
</dbReference>
<dbReference type="InterPro" id="IPR004095">
    <property type="entry name" value="TGS"/>
</dbReference>
<dbReference type="InterPro" id="IPR012676">
    <property type="entry name" value="TGS-like"/>
</dbReference>
<dbReference type="InterPro" id="IPR002320">
    <property type="entry name" value="Thr-tRNA-ligase_IIa"/>
</dbReference>
<dbReference type="InterPro" id="IPR018163">
    <property type="entry name" value="Thr/Ala-tRNA-synth_IIc_edit"/>
</dbReference>
<dbReference type="InterPro" id="IPR047246">
    <property type="entry name" value="ThrRS_anticodon"/>
</dbReference>
<dbReference type="InterPro" id="IPR033728">
    <property type="entry name" value="ThrRS_core"/>
</dbReference>
<dbReference type="InterPro" id="IPR012947">
    <property type="entry name" value="tRNA_SAD"/>
</dbReference>
<dbReference type="NCBIfam" id="TIGR00418">
    <property type="entry name" value="thrS"/>
    <property type="match status" value="1"/>
</dbReference>
<dbReference type="PANTHER" id="PTHR11451:SF44">
    <property type="entry name" value="THREONINE--TRNA LIGASE, CHLOROPLASTIC_MITOCHONDRIAL 2"/>
    <property type="match status" value="1"/>
</dbReference>
<dbReference type="PANTHER" id="PTHR11451">
    <property type="entry name" value="THREONINE-TRNA LIGASE"/>
    <property type="match status" value="1"/>
</dbReference>
<dbReference type="Pfam" id="PF03129">
    <property type="entry name" value="HGTP_anticodon"/>
    <property type="match status" value="1"/>
</dbReference>
<dbReference type="Pfam" id="PF02824">
    <property type="entry name" value="TGS"/>
    <property type="match status" value="1"/>
</dbReference>
<dbReference type="Pfam" id="PF00587">
    <property type="entry name" value="tRNA-synt_2b"/>
    <property type="match status" value="1"/>
</dbReference>
<dbReference type="Pfam" id="PF07973">
    <property type="entry name" value="tRNA_SAD"/>
    <property type="match status" value="1"/>
</dbReference>
<dbReference type="PRINTS" id="PR01047">
    <property type="entry name" value="TRNASYNTHTHR"/>
</dbReference>
<dbReference type="SMART" id="SM00863">
    <property type="entry name" value="tRNA_SAD"/>
    <property type="match status" value="1"/>
</dbReference>
<dbReference type="SUPFAM" id="SSF52954">
    <property type="entry name" value="Class II aaRS ABD-related"/>
    <property type="match status" value="1"/>
</dbReference>
<dbReference type="SUPFAM" id="SSF55681">
    <property type="entry name" value="Class II aaRS and biotin synthetases"/>
    <property type="match status" value="1"/>
</dbReference>
<dbReference type="SUPFAM" id="SSF81271">
    <property type="entry name" value="TGS-like"/>
    <property type="match status" value="1"/>
</dbReference>
<dbReference type="SUPFAM" id="SSF55186">
    <property type="entry name" value="ThrRS/AlaRS common domain"/>
    <property type="match status" value="1"/>
</dbReference>
<dbReference type="PROSITE" id="PS50862">
    <property type="entry name" value="AA_TRNA_LIGASE_II"/>
    <property type="match status" value="1"/>
</dbReference>
<dbReference type="PROSITE" id="PS51880">
    <property type="entry name" value="TGS"/>
    <property type="match status" value="1"/>
</dbReference>
<reference key="1">
    <citation type="journal article" date="2003" name="Science">
        <title>A genomic view of the human-Bacteroides thetaiotaomicron symbiosis.</title>
        <authorList>
            <person name="Xu J."/>
            <person name="Bjursell M.K."/>
            <person name="Himrod J."/>
            <person name="Deng S."/>
            <person name="Carmichael L.K."/>
            <person name="Chiang H.C."/>
            <person name="Hooper L.V."/>
            <person name="Gordon J.I."/>
        </authorList>
    </citation>
    <scope>NUCLEOTIDE SEQUENCE [LARGE SCALE GENOMIC DNA]</scope>
    <source>
        <strain>ATCC 29148 / DSM 2079 / JCM 5827 / CCUG 10774 / NCTC 10582 / VPI-5482 / E50</strain>
    </source>
</reference>